<reference key="1">
    <citation type="journal article" date="2006" name="J. Bacteriol.">
        <title>The genome sequence of Methanosphaera stadtmanae reveals why this human intestinal archaeon is restricted to methanol and H2 for methane formation and ATP synthesis.</title>
        <authorList>
            <person name="Fricke W.F."/>
            <person name="Seedorf H."/>
            <person name="Henne A."/>
            <person name="Kruer M."/>
            <person name="Liesegang H."/>
            <person name="Hedderich R."/>
            <person name="Gottschalk G."/>
            <person name="Thauer R.K."/>
        </authorList>
    </citation>
    <scope>NUCLEOTIDE SEQUENCE [LARGE SCALE GENOMIC DNA]</scope>
    <source>
        <strain>ATCC 43021 / DSM 3091 / JCM 11832 / MCB-3</strain>
    </source>
</reference>
<keyword id="KW-0067">ATP-binding</keyword>
<keyword id="KW-1003">Cell membrane</keyword>
<keyword id="KW-0472">Membrane</keyword>
<keyword id="KW-0547">Nucleotide-binding</keyword>
<keyword id="KW-1185">Reference proteome</keyword>
<keyword id="KW-1278">Translocase</keyword>
<keyword id="KW-0813">Transport</keyword>
<evidence type="ECO:0000255" key="1">
    <source>
        <dbReference type="HAMAP-Rule" id="MF_01710"/>
    </source>
</evidence>
<organism>
    <name type="scientific">Methanosphaera stadtmanae (strain ATCC 43021 / DSM 3091 / JCM 11832 / MCB-3)</name>
    <dbReference type="NCBI Taxonomy" id="339860"/>
    <lineage>
        <taxon>Archaea</taxon>
        <taxon>Methanobacteriati</taxon>
        <taxon>Methanobacteriota</taxon>
        <taxon>Methanomada group</taxon>
        <taxon>Methanobacteria</taxon>
        <taxon>Methanobacteriales</taxon>
        <taxon>Methanobacteriaceae</taxon>
        <taxon>Methanosphaera</taxon>
    </lineage>
</organism>
<feature type="chain" id="PRO_0000288021" description="Energy-coupling factor transporter ATP-binding protein EcfA">
    <location>
        <begin position="1"/>
        <end position="278"/>
    </location>
</feature>
<feature type="domain" description="ABC transporter" evidence="1">
    <location>
        <begin position="5"/>
        <end position="240"/>
    </location>
</feature>
<feature type="binding site" evidence="1">
    <location>
        <begin position="38"/>
        <end position="45"/>
    </location>
    <ligand>
        <name>ATP</name>
        <dbReference type="ChEBI" id="CHEBI:30616"/>
    </ligand>
</feature>
<comment type="function">
    <text evidence="1">ATP-binding (A) component of a common energy-coupling factor (ECF) ABC-transporter complex. Unlike classic ABC transporters this ECF transporter provides the energy necessary to transport a number of different substrates.</text>
</comment>
<comment type="subunit">
    <text evidence="1">Forms a stable energy-coupling factor (ECF) transporter complex composed of 2 membrane-embedded substrate-binding proteins (S component), 2 ATP-binding proteins (A component) and 2 transmembrane proteins (T component).</text>
</comment>
<comment type="subcellular location">
    <subcellularLocation>
        <location evidence="1">Cell membrane</location>
        <topology evidence="1">Peripheral membrane protein</topology>
    </subcellularLocation>
</comment>
<comment type="similarity">
    <text evidence="1">Belongs to the ABC transporter superfamily. Energy-coupling factor EcfA family.</text>
</comment>
<protein>
    <recommendedName>
        <fullName evidence="1">Energy-coupling factor transporter ATP-binding protein EcfA</fullName>
        <shortName evidence="1">ECF transporter A component EcfA</shortName>
        <ecNumber evidence="1">7.-.-.-</ecNumber>
    </recommendedName>
</protein>
<dbReference type="EC" id="7.-.-.-" evidence="1"/>
<dbReference type="EMBL" id="CP000102">
    <property type="protein sequence ID" value="ABC56802.1"/>
    <property type="molecule type" value="Genomic_DNA"/>
</dbReference>
<dbReference type="RefSeq" id="WP_011406002.1">
    <property type="nucleotide sequence ID" value="NC_007681.1"/>
</dbReference>
<dbReference type="SMR" id="Q2NHA1"/>
<dbReference type="STRING" id="339860.Msp_0401"/>
<dbReference type="KEGG" id="mst:Msp_0401"/>
<dbReference type="eggNOG" id="arCOG00202">
    <property type="taxonomic scope" value="Archaea"/>
</dbReference>
<dbReference type="HOGENOM" id="CLU_000604_1_22_2"/>
<dbReference type="OrthoDB" id="18209at2157"/>
<dbReference type="Proteomes" id="UP000001931">
    <property type="component" value="Chromosome"/>
</dbReference>
<dbReference type="GO" id="GO:0043190">
    <property type="term" value="C:ATP-binding cassette (ABC) transporter complex"/>
    <property type="evidence" value="ECO:0007669"/>
    <property type="project" value="TreeGrafter"/>
</dbReference>
<dbReference type="GO" id="GO:0005524">
    <property type="term" value="F:ATP binding"/>
    <property type="evidence" value="ECO:0007669"/>
    <property type="project" value="UniProtKB-KW"/>
</dbReference>
<dbReference type="GO" id="GO:0016887">
    <property type="term" value="F:ATP hydrolysis activity"/>
    <property type="evidence" value="ECO:0007669"/>
    <property type="project" value="InterPro"/>
</dbReference>
<dbReference type="GO" id="GO:0042626">
    <property type="term" value="F:ATPase-coupled transmembrane transporter activity"/>
    <property type="evidence" value="ECO:0007669"/>
    <property type="project" value="TreeGrafter"/>
</dbReference>
<dbReference type="GO" id="GO:0006824">
    <property type="term" value="P:cobalt ion transport"/>
    <property type="evidence" value="ECO:0007669"/>
    <property type="project" value="InterPro"/>
</dbReference>
<dbReference type="CDD" id="cd03225">
    <property type="entry name" value="ABC_cobalt_CbiO_domain1"/>
    <property type="match status" value="1"/>
</dbReference>
<dbReference type="FunFam" id="3.40.50.300:FF:000224">
    <property type="entry name" value="Energy-coupling factor transporter ATP-binding protein EcfA"/>
    <property type="match status" value="1"/>
</dbReference>
<dbReference type="Gene3D" id="3.40.50.300">
    <property type="entry name" value="P-loop containing nucleotide triphosphate hydrolases"/>
    <property type="match status" value="1"/>
</dbReference>
<dbReference type="InterPro" id="IPR003593">
    <property type="entry name" value="AAA+_ATPase"/>
</dbReference>
<dbReference type="InterPro" id="IPR003439">
    <property type="entry name" value="ABC_transporter-like_ATP-bd"/>
</dbReference>
<dbReference type="InterPro" id="IPR017871">
    <property type="entry name" value="ABC_transporter-like_CS"/>
</dbReference>
<dbReference type="InterPro" id="IPR015856">
    <property type="entry name" value="ABC_transpr_CbiO/EcfA_su"/>
</dbReference>
<dbReference type="InterPro" id="IPR005876">
    <property type="entry name" value="Co_trans_ATP-bd"/>
</dbReference>
<dbReference type="InterPro" id="IPR050095">
    <property type="entry name" value="ECF_ABC_transporter_ATP-bd"/>
</dbReference>
<dbReference type="InterPro" id="IPR027417">
    <property type="entry name" value="P-loop_NTPase"/>
</dbReference>
<dbReference type="NCBIfam" id="TIGR01166">
    <property type="entry name" value="cbiO"/>
    <property type="match status" value="1"/>
</dbReference>
<dbReference type="PANTHER" id="PTHR43553:SF24">
    <property type="entry name" value="ENERGY-COUPLING FACTOR TRANSPORTER ATP-BINDING PROTEIN ECFA1"/>
    <property type="match status" value="1"/>
</dbReference>
<dbReference type="PANTHER" id="PTHR43553">
    <property type="entry name" value="HEAVY METAL TRANSPORTER"/>
    <property type="match status" value="1"/>
</dbReference>
<dbReference type="Pfam" id="PF00005">
    <property type="entry name" value="ABC_tran"/>
    <property type="match status" value="1"/>
</dbReference>
<dbReference type="SMART" id="SM00382">
    <property type="entry name" value="AAA"/>
    <property type="match status" value="1"/>
</dbReference>
<dbReference type="SUPFAM" id="SSF52540">
    <property type="entry name" value="P-loop containing nucleoside triphosphate hydrolases"/>
    <property type="match status" value="1"/>
</dbReference>
<dbReference type="PROSITE" id="PS00211">
    <property type="entry name" value="ABC_TRANSPORTER_1"/>
    <property type="match status" value="1"/>
</dbReference>
<dbReference type="PROSITE" id="PS50893">
    <property type="entry name" value="ABC_TRANSPORTER_2"/>
    <property type="match status" value="1"/>
</dbReference>
<dbReference type="PROSITE" id="PS51246">
    <property type="entry name" value="CBIO"/>
    <property type="match status" value="1"/>
</dbReference>
<gene>
    <name evidence="1" type="primary">ecfA</name>
    <name type="synonym">cbiO</name>
    <name type="ordered locus">Msp_0401</name>
</gene>
<accession>Q2NHA1</accession>
<sequence length="278" mass="30551">MTTILETKNLVYNYPDGTEALKGIDFKLEEGEMISLLGHNGAGKSTLFLHFNGIIEPTSGSVEIDGETLKYDKKSLLAARQKVGIVFQNPDDQLFAPTVLEDVAFGPMNMGLSEEEVKTRSMDALEKVGMSDYAEKPPHHLSGGQKKRVAIAGILSMKPKVMVLDEPTSGLDPNGASSIMQLLYDLNKEGMTIIISTHDVDLVPLYSDDIEVIVDGKIIKSGTCKEIFTDKEVIDEADLRLPWIGQLFEKLDKEHNITFGNGYPLTVSDAYDALLTKL</sequence>
<name>ECFA_METST</name>
<proteinExistence type="inferred from homology"/>